<comment type="function">
    <text evidence="1">Located at the top of the head of the 30S subunit, it contacts several helices of the 16S rRNA. In the 70S ribosome it contacts the 23S rRNA (bridge B1a) and protein L5 of the 50S subunit (bridge B1b), connecting the 2 subunits; these bridges are implicated in subunit movement. Contacts the tRNAs in the A and P-sites.</text>
</comment>
<comment type="subunit">
    <text evidence="1">Part of the 30S ribosomal subunit. Forms a loose heterodimer with protein S19. Forms two bridges to the 50S subunit in the 70S ribosome.</text>
</comment>
<comment type="similarity">
    <text evidence="1">Belongs to the universal ribosomal protein uS13 family.</text>
</comment>
<proteinExistence type="inferred from homology"/>
<evidence type="ECO:0000255" key="1">
    <source>
        <dbReference type="HAMAP-Rule" id="MF_01315"/>
    </source>
</evidence>
<evidence type="ECO:0000256" key="2">
    <source>
        <dbReference type="SAM" id="MobiDB-lite"/>
    </source>
</evidence>
<evidence type="ECO:0000305" key="3"/>
<keyword id="KW-0687">Ribonucleoprotein</keyword>
<keyword id="KW-0689">Ribosomal protein</keyword>
<keyword id="KW-0694">RNA-binding</keyword>
<keyword id="KW-0699">rRNA-binding</keyword>
<keyword id="KW-0820">tRNA-binding</keyword>
<name>RS13_CAMJR</name>
<accession>Q5HSJ9</accession>
<sequence>MARIAGVDLPKKKRIEYGLTYIYGIGLFTSRKILDKVGISYDKRVHELSEDEAAAIRKEIQENYMVEGDLRKQVAMDIKALMDLGSFRGLRHRKGLPVRGQKTKTNARTRKGKRKTVGAKS</sequence>
<gene>
    <name evidence="1" type="primary">rpsM</name>
    <name type="ordered locus">CJE1764</name>
</gene>
<protein>
    <recommendedName>
        <fullName evidence="1">Small ribosomal subunit protein uS13</fullName>
    </recommendedName>
    <alternativeName>
        <fullName evidence="3">30S ribosomal protein S13</fullName>
    </alternativeName>
</protein>
<dbReference type="EMBL" id="CP000025">
    <property type="protein sequence ID" value="AAW36188.1"/>
    <property type="molecule type" value="Genomic_DNA"/>
</dbReference>
<dbReference type="RefSeq" id="WP_002800121.1">
    <property type="nucleotide sequence ID" value="NC_003912.7"/>
</dbReference>
<dbReference type="SMR" id="Q5HSJ9"/>
<dbReference type="KEGG" id="cjr:CJE1764"/>
<dbReference type="HOGENOM" id="CLU_103849_1_2_7"/>
<dbReference type="GO" id="GO:0005829">
    <property type="term" value="C:cytosol"/>
    <property type="evidence" value="ECO:0007669"/>
    <property type="project" value="TreeGrafter"/>
</dbReference>
<dbReference type="GO" id="GO:0015935">
    <property type="term" value="C:small ribosomal subunit"/>
    <property type="evidence" value="ECO:0007669"/>
    <property type="project" value="TreeGrafter"/>
</dbReference>
<dbReference type="GO" id="GO:0019843">
    <property type="term" value="F:rRNA binding"/>
    <property type="evidence" value="ECO:0007669"/>
    <property type="project" value="UniProtKB-UniRule"/>
</dbReference>
<dbReference type="GO" id="GO:0003735">
    <property type="term" value="F:structural constituent of ribosome"/>
    <property type="evidence" value="ECO:0007669"/>
    <property type="project" value="InterPro"/>
</dbReference>
<dbReference type="GO" id="GO:0000049">
    <property type="term" value="F:tRNA binding"/>
    <property type="evidence" value="ECO:0007669"/>
    <property type="project" value="UniProtKB-UniRule"/>
</dbReference>
<dbReference type="GO" id="GO:0006412">
    <property type="term" value="P:translation"/>
    <property type="evidence" value="ECO:0007669"/>
    <property type="project" value="UniProtKB-UniRule"/>
</dbReference>
<dbReference type="FunFam" id="1.10.8.50:FF:000001">
    <property type="entry name" value="30S ribosomal protein S13"/>
    <property type="match status" value="1"/>
</dbReference>
<dbReference type="FunFam" id="4.10.910.10:FF:000001">
    <property type="entry name" value="30S ribosomal protein S13"/>
    <property type="match status" value="1"/>
</dbReference>
<dbReference type="Gene3D" id="1.10.8.50">
    <property type="match status" value="1"/>
</dbReference>
<dbReference type="Gene3D" id="4.10.910.10">
    <property type="entry name" value="30s ribosomal protein s13, domain 2"/>
    <property type="match status" value="1"/>
</dbReference>
<dbReference type="HAMAP" id="MF_01315">
    <property type="entry name" value="Ribosomal_uS13"/>
    <property type="match status" value="1"/>
</dbReference>
<dbReference type="InterPro" id="IPR027437">
    <property type="entry name" value="Rbsml_uS13_C"/>
</dbReference>
<dbReference type="InterPro" id="IPR001892">
    <property type="entry name" value="Ribosomal_uS13"/>
</dbReference>
<dbReference type="InterPro" id="IPR010979">
    <property type="entry name" value="Ribosomal_uS13-like_H2TH"/>
</dbReference>
<dbReference type="InterPro" id="IPR019980">
    <property type="entry name" value="Ribosomal_uS13_bac-type"/>
</dbReference>
<dbReference type="InterPro" id="IPR018269">
    <property type="entry name" value="Ribosomal_uS13_CS"/>
</dbReference>
<dbReference type="NCBIfam" id="TIGR03631">
    <property type="entry name" value="uS13_bact"/>
    <property type="match status" value="1"/>
</dbReference>
<dbReference type="PANTHER" id="PTHR10871">
    <property type="entry name" value="30S RIBOSOMAL PROTEIN S13/40S RIBOSOMAL PROTEIN S18"/>
    <property type="match status" value="1"/>
</dbReference>
<dbReference type="PANTHER" id="PTHR10871:SF1">
    <property type="entry name" value="SMALL RIBOSOMAL SUBUNIT PROTEIN US13M"/>
    <property type="match status" value="1"/>
</dbReference>
<dbReference type="Pfam" id="PF00416">
    <property type="entry name" value="Ribosomal_S13"/>
    <property type="match status" value="1"/>
</dbReference>
<dbReference type="PIRSF" id="PIRSF002134">
    <property type="entry name" value="Ribosomal_S13"/>
    <property type="match status" value="1"/>
</dbReference>
<dbReference type="SUPFAM" id="SSF46946">
    <property type="entry name" value="S13-like H2TH domain"/>
    <property type="match status" value="1"/>
</dbReference>
<dbReference type="PROSITE" id="PS00646">
    <property type="entry name" value="RIBOSOMAL_S13_1"/>
    <property type="match status" value="1"/>
</dbReference>
<dbReference type="PROSITE" id="PS50159">
    <property type="entry name" value="RIBOSOMAL_S13_2"/>
    <property type="match status" value="1"/>
</dbReference>
<feature type="chain" id="PRO_0000230488" description="Small ribosomal subunit protein uS13">
    <location>
        <begin position="1"/>
        <end position="121"/>
    </location>
</feature>
<feature type="region of interest" description="Disordered" evidence="2">
    <location>
        <begin position="95"/>
        <end position="121"/>
    </location>
</feature>
<organism>
    <name type="scientific">Campylobacter jejuni (strain RM1221)</name>
    <dbReference type="NCBI Taxonomy" id="195099"/>
    <lineage>
        <taxon>Bacteria</taxon>
        <taxon>Pseudomonadati</taxon>
        <taxon>Campylobacterota</taxon>
        <taxon>Epsilonproteobacteria</taxon>
        <taxon>Campylobacterales</taxon>
        <taxon>Campylobacteraceae</taxon>
        <taxon>Campylobacter</taxon>
    </lineage>
</organism>
<reference key="1">
    <citation type="journal article" date="2005" name="PLoS Biol.">
        <title>Major structural differences and novel potential virulence mechanisms from the genomes of multiple Campylobacter species.</title>
        <authorList>
            <person name="Fouts D.E."/>
            <person name="Mongodin E.F."/>
            <person name="Mandrell R.E."/>
            <person name="Miller W.G."/>
            <person name="Rasko D.A."/>
            <person name="Ravel J."/>
            <person name="Brinkac L.M."/>
            <person name="DeBoy R.T."/>
            <person name="Parker C.T."/>
            <person name="Daugherty S.C."/>
            <person name="Dodson R.J."/>
            <person name="Durkin A.S."/>
            <person name="Madupu R."/>
            <person name="Sullivan S.A."/>
            <person name="Shetty J.U."/>
            <person name="Ayodeji M.A."/>
            <person name="Shvartsbeyn A."/>
            <person name="Schatz M.C."/>
            <person name="Badger J.H."/>
            <person name="Fraser C.M."/>
            <person name="Nelson K.E."/>
        </authorList>
    </citation>
    <scope>NUCLEOTIDE SEQUENCE [LARGE SCALE GENOMIC DNA]</scope>
    <source>
        <strain>RM1221</strain>
    </source>
</reference>